<feature type="chain" id="PRO_1000215370" description="Probable manganese efflux pump MntP">
    <location>
        <begin position="1"/>
        <end position="188"/>
    </location>
</feature>
<feature type="transmembrane region" description="Helical" evidence="1">
    <location>
        <begin position="3"/>
        <end position="23"/>
    </location>
</feature>
<feature type="transmembrane region" description="Helical" evidence="1">
    <location>
        <begin position="66"/>
        <end position="86"/>
    </location>
</feature>
<feature type="transmembrane region" description="Helical" evidence="1">
    <location>
        <begin position="106"/>
        <end position="128"/>
    </location>
</feature>
<feature type="transmembrane region" description="Helical" evidence="1">
    <location>
        <begin position="143"/>
        <end position="163"/>
    </location>
</feature>
<feature type="transmembrane region" description="Helical" evidence="1">
    <location>
        <begin position="168"/>
        <end position="188"/>
    </location>
</feature>
<comment type="function">
    <text evidence="1">Probably functions as a manganese efflux pump.</text>
</comment>
<comment type="subcellular location">
    <subcellularLocation>
        <location evidence="1">Cell inner membrane</location>
        <topology evidence="1">Multi-pass membrane protein</topology>
    </subcellularLocation>
</comment>
<comment type="similarity">
    <text evidence="1">Belongs to the MntP (TC 9.B.29) family.</text>
</comment>
<proteinExistence type="inferred from homology"/>
<organism>
    <name type="scientific">Escherichia coli (strain K12 / MC4100 / BW2952)</name>
    <dbReference type="NCBI Taxonomy" id="595496"/>
    <lineage>
        <taxon>Bacteria</taxon>
        <taxon>Pseudomonadati</taxon>
        <taxon>Pseudomonadota</taxon>
        <taxon>Gammaproteobacteria</taxon>
        <taxon>Enterobacterales</taxon>
        <taxon>Enterobacteriaceae</taxon>
        <taxon>Escherichia</taxon>
    </lineage>
</organism>
<name>MNTP_ECOBW</name>
<evidence type="ECO:0000255" key="1">
    <source>
        <dbReference type="HAMAP-Rule" id="MF_01521"/>
    </source>
</evidence>
<accession>C4ZZH7</accession>
<reference key="1">
    <citation type="journal article" date="2009" name="J. Bacteriol.">
        <title>Genomic sequencing reveals regulatory mutations and recombinational events in the widely used MC4100 lineage of Escherichia coli K-12.</title>
        <authorList>
            <person name="Ferenci T."/>
            <person name="Zhou Z."/>
            <person name="Betteridge T."/>
            <person name="Ren Y."/>
            <person name="Liu Y."/>
            <person name="Feng L."/>
            <person name="Reeves P.R."/>
            <person name="Wang L."/>
        </authorList>
    </citation>
    <scope>NUCLEOTIDE SEQUENCE [LARGE SCALE GENOMIC DNA]</scope>
    <source>
        <strain>K12 / MC4100 / BW2952</strain>
    </source>
</reference>
<keyword id="KW-0997">Cell inner membrane</keyword>
<keyword id="KW-1003">Cell membrane</keyword>
<keyword id="KW-0406">Ion transport</keyword>
<keyword id="KW-0464">Manganese</keyword>
<keyword id="KW-0472">Membrane</keyword>
<keyword id="KW-0812">Transmembrane</keyword>
<keyword id="KW-1133">Transmembrane helix</keyword>
<keyword id="KW-0813">Transport</keyword>
<protein>
    <recommendedName>
        <fullName evidence="1">Probable manganese efflux pump MntP</fullName>
    </recommendedName>
</protein>
<sequence length="188" mass="20117">MNITATVLLAFGMSMDAFAASIGKGATLHKPKFSEALRTGLIFGAVETLTPLIGWGMGMLASRFVLEWNHWIAFVLLIFLGGRMIIEGFRGADDEDEEPRRRHGFWLLVTTAIATSLDAMAVGVGLAFLQVNIIATALAIGCATLIMSTLGMMVGRFIGSIIGKKAEILGGLVLIGIGVQILWTHFHG</sequence>
<gene>
    <name evidence="1" type="primary">mntP</name>
    <name type="synonym">yebN</name>
    <name type="ordered locus">BWG_1634</name>
</gene>
<dbReference type="EMBL" id="CP001396">
    <property type="protein sequence ID" value="ACR62222.1"/>
    <property type="molecule type" value="Genomic_DNA"/>
</dbReference>
<dbReference type="RefSeq" id="WP_001296134.1">
    <property type="nucleotide sequence ID" value="NC_012759.1"/>
</dbReference>
<dbReference type="GeneID" id="93776070"/>
<dbReference type="KEGG" id="ebw:BWG_1634"/>
<dbReference type="HOGENOM" id="CLU_096410_0_0_6"/>
<dbReference type="GO" id="GO:0005886">
    <property type="term" value="C:plasma membrane"/>
    <property type="evidence" value="ECO:0007669"/>
    <property type="project" value="UniProtKB-SubCell"/>
</dbReference>
<dbReference type="GO" id="GO:0005384">
    <property type="term" value="F:manganese ion transmembrane transporter activity"/>
    <property type="evidence" value="ECO:0007669"/>
    <property type="project" value="UniProtKB-UniRule"/>
</dbReference>
<dbReference type="HAMAP" id="MF_01521">
    <property type="entry name" value="MntP_pump"/>
    <property type="match status" value="1"/>
</dbReference>
<dbReference type="InterPro" id="IPR003810">
    <property type="entry name" value="Mntp/YtaF"/>
</dbReference>
<dbReference type="InterPro" id="IPR022929">
    <property type="entry name" value="Put_MntP"/>
</dbReference>
<dbReference type="NCBIfam" id="NF008546">
    <property type="entry name" value="PRK11469.1"/>
    <property type="match status" value="1"/>
</dbReference>
<dbReference type="PANTHER" id="PTHR35529">
    <property type="entry name" value="MANGANESE EFFLUX PUMP MNTP-RELATED"/>
    <property type="match status" value="1"/>
</dbReference>
<dbReference type="PANTHER" id="PTHR35529:SF1">
    <property type="entry name" value="MANGANESE EFFLUX PUMP MNTP-RELATED"/>
    <property type="match status" value="1"/>
</dbReference>
<dbReference type="Pfam" id="PF02659">
    <property type="entry name" value="Mntp"/>
    <property type="match status" value="1"/>
</dbReference>